<accession>P50436</accession>
<accession>D9PYN7</accession>
<name>GLYA_METTM</name>
<feature type="chain" id="PRO_0000113717" description="Serine hydroxymethyltransferase">
    <location>
        <begin position="1"/>
        <end position="423"/>
    </location>
</feature>
<feature type="binding site" evidence="1">
    <location>
        <begin position="121"/>
        <end position="123"/>
    </location>
    <ligand>
        <name>(6S)-5,6,7,8-tetrahydrofolate</name>
        <dbReference type="ChEBI" id="CHEBI:57453"/>
    </ligand>
</feature>
<feature type="binding site" evidence="1">
    <location>
        <position position="242"/>
    </location>
    <ligand>
        <name>(6S)-5,6,7,8-tetrahydrofolate</name>
        <dbReference type="ChEBI" id="CHEBI:57453"/>
    </ligand>
</feature>
<feature type="site" description="Plays an important role in substrate specificity" evidence="1">
    <location>
        <position position="226"/>
    </location>
</feature>
<feature type="modified residue" description="N6-(pyridoxal phosphate)lysine" evidence="1">
    <location>
        <position position="227"/>
    </location>
</feature>
<feature type="sequence conflict" description="In Ref. 1; CAA63066." evidence="2" ref="1">
    <original>KVHYAFEESGAYKYMEIL</original>
    <variation>RSTTPLRSQGPTSTWRSCR</variation>
    <location>
        <begin position="406"/>
        <end position="423"/>
    </location>
</feature>
<evidence type="ECO:0000255" key="1">
    <source>
        <dbReference type="HAMAP-Rule" id="MF_00051"/>
    </source>
</evidence>
<evidence type="ECO:0000305" key="2"/>
<proteinExistence type="inferred from homology"/>
<keyword id="KW-0028">Amino-acid biosynthesis</keyword>
<keyword id="KW-0963">Cytoplasm</keyword>
<keyword id="KW-0554">One-carbon metabolism</keyword>
<keyword id="KW-0663">Pyridoxal phosphate</keyword>
<keyword id="KW-0808">Transferase</keyword>
<gene>
    <name evidence="1" type="primary">glyA</name>
    <name type="ordered locus">MTBMA_c17670</name>
</gene>
<dbReference type="EC" id="2.1.2.-" evidence="1"/>
<dbReference type="EMBL" id="X92083">
    <property type="protein sequence ID" value="CAA63066.1"/>
    <property type="molecule type" value="Genomic_DNA"/>
</dbReference>
<dbReference type="EMBL" id="CP001710">
    <property type="protein sequence ID" value="ADL59335.1"/>
    <property type="molecule type" value="Genomic_DNA"/>
</dbReference>
<dbReference type="RefSeq" id="WP_013296545.1">
    <property type="nucleotide sequence ID" value="NC_014408.1"/>
</dbReference>
<dbReference type="SMR" id="P50436"/>
<dbReference type="STRING" id="79929.MTBMA_c17670"/>
<dbReference type="PaxDb" id="79929-MTBMA_c17670"/>
<dbReference type="GeneID" id="41327102"/>
<dbReference type="GeneID" id="9705478"/>
<dbReference type="KEGG" id="mmg:MTBMA_c17670"/>
<dbReference type="PATRIC" id="fig|79929.8.peg.1704"/>
<dbReference type="HOGENOM" id="CLU_022477_2_1_2"/>
<dbReference type="OrthoDB" id="5821at2157"/>
<dbReference type="UniPathway" id="UPA00288">
    <property type="reaction ID" value="UER01023"/>
</dbReference>
<dbReference type="Proteomes" id="UP000000345">
    <property type="component" value="Chromosome"/>
</dbReference>
<dbReference type="GO" id="GO:0005737">
    <property type="term" value="C:cytoplasm"/>
    <property type="evidence" value="ECO:0007669"/>
    <property type="project" value="UniProtKB-SubCell"/>
</dbReference>
<dbReference type="GO" id="GO:0004372">
    <property type="term" value="F:glycine hydroxymethyltransferase activity"/>
    <property type="evidence" value="ECO:0007669"/>
    <property type="project" value="UniProtKB-UniRule"/>
</dbReference>
<dbReference type="GO" id="GO:0030170">
    <property type="term" value="F:pyridoxal phosphate binding"/>
    <property type="evidence" value="ECO:0007669"/>
    <property type="project" value="UniProtKB-UniRule"/>
</dbReference>
<dbReference type="GO" id="GO:0019264">
    <property type="term" value="P:glycine biosynthetic process from serine"/>
    <property type="evidence" value="ECO:0007669"/>
    <property type="project" value="UniProtKB-UniRule"/>
</dbReference>
<dbReference type="GO" id="GO:0035999">
    <property type="term" value="P:tetrahydrofolate interconversion"/>
    <property type="evidence" value="ECO:0007669"/>
    <property type="project" value="InterPro"/>
</dbReference>
<dbReference type="CDD" id="cd00378">
    <property type="entry name" value="SHMT"/>
    <property type="match status" value="1"/>
</dbReference>
<dbReference type="FunFam" id="3.40.640.10:FF:000101">
    <property type="entry name" value="Serine hydroxymethyltransferase"/>
    <property type="match status" value="1"/>
</dbReference>
<dbReference type="Gene3D" id="3.90.1150.10">
    <property type="entry name" value="Aspartate Aminotransferase, domain 1"/>
    <property type="match status" value="1"/>
</dbReference>
<dbReference type="Gene3D" id="3.40.640.10">
    <property type="entry name" value="Type I PLP-dependent aspartate aminotransferase-like (Major domain)"/>
    <property type="match status" value="1"/>
</dbReference>
<dbReference type="HAMAP" id="MF_00051">
    <property type="entry name" value="SHMT"/>
    <property type="match status" value="1"/>
</dbReference>
<dbReference type="InterPro" id="IPR015424">
    <property type="entry name" value="PyrdxlP-dep_Trfase"/>
</dbReference>
<dbReference type="InterPro" id="IPR015421">
    <property type="entry name" value="PyrdxlP-dep_Trfase_major"/>
</dbReference>
<dbReference type="InterPro" id="IPR015422">
    <property type="entry name" value="PyrdxlP-dep_Trfase_small"/>
</dbReference>
<dbReference type="InterPro" id="IPR001085">
    <property type="entry name" value="Ser_HO-MeTrfase"/>
</dbReference>
<dbReference type="InterPro" id="IPR049943">
    <property type="entry name" value="Ser_HO-MeTrfase-like"/>
</dbReference>
<dbReference type="InterPro" id="IPR019798">
    <property type="entry name" value="Ser_HO-MeTrfase_PLP_BS"/>
</dbReference>
<dbReference type="InterPro" id="IPR039429">
    <property type="entry name" value="SHMT-like_dom"/>
</dbReference>
<dbReference type="NCBIfam" id="NF000586">
    <property type="entry name" value="PRK00011.1"/>
    <property type="match status" value="1"/>
</dbReference>
<dbReference type="PANTHER" id="PTHR11680">
    <property type="entry name" value="SERINE HYDROXYMETHYLTRANSFERASE"/>
    <property type="match status" value="1"/>
</dbReference>
<dbReference type="PANTHER" id="PTHR11680:SF35">
    <property type="entry name" value="SERINE HYDROXYMETHYLTRANSFERASE 1"/>
    <property type="match status" value="1"/>
</dbReference>
<dbReference type="Pfam" id="PF00464">
    <property type="entry name" value="SHMT"/>
    <property type="match status" value="1"/>
</dbReference>
<dbReference type="PIRSF" id="PIRSF000412">
    <property type="entry name" value="SHMT"/>
    <property type="match status" value="1"/>
</dbReference>
<dbReference type="SUPFAM" id="SSF53383">
    <property type="entry name" value="PLP-dependent transferases"/>
    <property type="match status" value="1"/>
</dbReference>
<dbReference type="PROSITE" id="PS00096">
    <property type="entry name" value="SHMT"/>
    <property type="match status" value="1"/>
</dbReference>
<reference key="1">
    <citation type="journal article" date="1996" name="Eur. J. Biochem.">
        <title>Primary structure of cyclohydrolase (Mch) from Methanobacterium thermoautotrophicum (strain Marburg) and functional expression of the mch gene in Escherichia coli.</title>
        <authorList>
            <person name="Vaupel M."/>
            <person name="Dietz H."/>
            <person name="Linder D."/>
            <person name="Thauer R.K."/>
        </authorList>
    </citation>
    <scope>NUCLEOTIDE SEQUENCE [GENOMIC DNA]</scope>
    <source>
        <strain>ATCC BAA-927 / DSM 2133 / JCM 14651 / NBRC 100331 / OCM 82 / Marburg</strain>
    </source>
</reference>
<reference key="2">
    <citation type="journal article" date="2010" name="J. Bacteriol.">
        <title>Complete genome sequence of Methanothermobacter marburgensis, a methanoarchaeon model organism.</title>
        <authorList>
            <person name="Liesegang H."/>
            <person name="Kaster A.K."/>
            <person name="Wiezer A."/>
            <person name="Goenrich M."/>
            <person name="Wollherr A."/>
            <person name="Seedorf H."/>
            <person name="Gottschalk G."/>
            <person name="Thauer R.K."/>
        </authorList>
    </citation>
    <scope>NUCLEOTIDE SEQUENCE [LARGE SCALE GENOMIC DNA]</scope>
    <source>
        <strain>ATCC BAA-927 / DSM 2133 / JCM 14651 / NBRC 100331 / OCM 82 / Marburg</strain>
    </source>
</reference>
<protein>
    <recommendedName>
        <fullName evidence="1">Serine hydroxymethyltransferase</fullName>
        <shortName evidence="1">SHMT</shortName>
        <shortName evidence="1">Serine methylase</shortName>
        <ecNumber evidence="1">2.1.2.-</ecNumber>
    </recommendedName>
</protein>
<sequence length="423" mass="47077">MVSNQDYTERIRDLMKDHNSWMESSINLIASENITSSRVKEALISDLSHRYAEGLPGERLYEGCRYIDEIEEITIELSKKLFRAEHANVQPTSGVVANLACFFATADVGDPMMAMEVPYGGHISHAKVSAAGVRGFKIYTHPFDFENMNIDADAMKKKILEVKPRIILFGGSLFLFPHPVEEAVEAAEEVGARIMYDGAHVLGLIAGGYFQDPLREGADMLVGSTHKTFPGPQGGIILCREELADDIDEAVFPGLVSNHHLHHVAGLGIATAEMLEFGSEYAAQTIRNAKKLAENLNELGFNVLCEHLDFTESHQVVMDVSDIGRAAEISKKLEANNIILNKNLLPWDDVNRSDDPSGIRIGTQEITRRGMKESEMSEVAEYIKKVVIDGRNVKEEVSEFMSSYTKVHYAFEESGAYKYMEIL</sequence>
<organism>
    <name type="scientific">Methanothermobacter marburgensis (strain ATCC BAA-927 / DSM 2133 / JCM 14651 / NBRC 100331 / OCM 82 / Marburg)</name>
    <name type="common">Methanobacterium thermoautotrophicum</name>
    <dbReference type="NCBI Taxonomy" id="79929"/>
    <lineage>
        <taxon>Archaea</taxon>
        <taxon>Methanobacteriati</taxon>
        <taxon>Methanobacteriota</taxon>
        <taxon>Methanomada group</taxon>
        <taxon>Methanobacteria</taxon>
        <taxon>Methanobacteriales</taxon>
        <taxon>Methanobacteriaceae</taxon>
        <taxon>Methanothermobacter</taxon>
    </lineage>
</organism>
<comment type="function">
    <text evidence="1">Catalyzes the reversible interconversion of serine and glycine with tetrahydromethanopterin (H4MPT) serving as the one-carbon carrier. Also exhibits a pteridine-independent aldolase activity toward beta-hydroxyamino acids, producing glycine and aldehydes, via a retro-aldol mechanism.</text>
</comment>
<comment type="catalytic activity">
    <reaction evidence="1">
        <text>5,10-methylenetetrahydromethanopterin + glycine + H2O = 5,6,7,8-tetrahydromethanopterin + L-serine</text>
        <dbReference type="Rhea" id="RHEA:47104"/>
        <dbReference type="ChEBI" id="CHEBI:15377"/>
        <dbReference type="ChEBI" id="CHEBI:33384"/>
        <dbReference type="ChEBI" id="CHEBI:57305"/>
        <dbReference type="ChEBI" id="CHEBI:57818"/>
        <dbReference type="ChEBI" id="CHEBI:58103"/>
    </reaction>
</comment>
<comment type="cofactor">
    <cofactor evidence="1">
        <name>pyridoxal 5'-phosphate</name>
        <dbReference type="ChEBI" id="CHEBI:597326"/>
    </cofactor>
</comment>
<comment type="pathway">
    <text evidence="1">Amino-acid biosynthesis; glycine biosynthesis; glycine from L-serine: step 1/1.</text>
</comment>
<comment type="subunit">
    <text evidence="1">Homodimer.</text>
</comment>
<comment type="subcellular location">
    <subcellularLocation>
        <location evidence="1">Cytoplasm</location>
    </subcellularLocation>
</comment>
<comment type="similarity">
    <text evidence="1">Belongs to the SHMT family.</text>
</comment>